<accession>Q39E36</accession>
<evidence type="ECO:0000255" key="1">
    <source>
        <dbReference type="HAMAP-Rule" id="MF_00505"/>
    </source>
</evidence>
<protein>
    <recommendedName>
        <fullName evidence="1">Chaperone protein HtpG</fullName>
    </recommendedName>
    <alternativeName>
        <fullName evidence="1">Heat shock protein HtpG</fullName>
    </alternativeName>
    <alternativeName>
        <fullName evidence="1">High temperature protein G</fullName>
    </alternativeName>
</protein>
<comment type="function">
    <text evidence="1">Molecular chaperone. Has ATPase activity.</text>
</comment>
<comment type="subunit">
    <text evidence="1">Homodimer.</text>
</comment>
<comment type="subcellular location">
    <subcellularLocation>
        <location evidence="1">Cytoplasm</location>
    </subcellularLocation>
</comment>
<comment type="similarity">
    <text evidence="1">Belongs to the heat shock protein 90 family.</text>
</comment>
<feature type="chain" id="PRO_0000236987" description="Chaperone protein HtpG">
    <location>
        <begin position="1"/>
        <end position="632"/>
    </location>
</feature>
<feature type="region of interest" description="A; substrate-binding" evidence="1">
    <location>
        <begin position="1"/>
        <end position="339"/>
    </location>
</feature>
<feature type="region of interest" description="B" evidence="1">
    <location>
        <begin position="340"/>
        <end position="559"/>
    </location>
</feature>
<feature type="region of interest" description="C" evidence="1">
    <location>
        <begin position="560"/>
        <end position="632"/>
    </location>
</feature>
<proteinExistence type="inferred from homology"/>
<reference key="1">
    <citation type="submission" date="2005-10" db="EMBL/GenBank/DDBJ databases">
        <title>Complete sequence of chromosome 1 of Burkholderia sp. 383.</title>
        <authorList>
            <consortium name="US DOE Joint Genome Institute"/>
            <person name="Copeland A."/>
            <person name="Lucas S."/>
            <person name="Lapidus A."/>
            <person name="Barry K."/>
            <person name="Detter J.C."/>
            <person name="Glavina T."/>
            <person name="Hammon N."/>
            <person name="Israni S."/>
            <person name="Pitluck S."/>
            <person name="Chain P."/>
            <person name="Malfatti S."/>
            <person name="Shin M."/>
            <person name="Vergez L."/>
            <person name="Schmutz J."/>
            <person name="Larimer F."/>
            <person name="Land M."/>
            <person name="Kyrpides N."/>
            <person name="Lykidis A."/>
            <person name="Richardson P."/>
        </authorList>
    </citation>
    <scope>NUCLEOTIDE SEQUENCE [LARGE SCALE GENOMIC DNA]</scope>
    <source>
        <strain>ATCC 17760 / DSM 23089 / LMG 22485 / NCIMB 9086 / R18194 / 383</strain>
    </source>
</reference>
<keyword id="KW-0067">ATP-binding</keyword>
<keyword id="KW-0143">Chaperone</keyword>
<keyword id="KW-0963">Cytoplasm</keyword>
<keyword id="KW-0547">Nucleotide-binding</keyword>
<keyword id="KW-0346">Stress response</keyword>
<organism>
    <name type="scientific">Burkholderia lata (strain ATCC 17760 / DSM 23089 / LMG 22485 / NCIMB 9086 / R18194 / 383)</name>
    <dbReference type="NCBI Taxonomy" id="482957"/>
    <lineage>
        <taxon>Bacteria</taxon>
        <taxon>Pseudomonadati</taxon>
        <taxon>Pseudomonadota</taxon>
        <taxon>Betaproteobacteria</taxon>
        <taxon>Burkholderiales</taxon>
        <taxon>Burkholderiaceae</taxon>
        <taxon>Burkholderia</taxon>
        <taxon>Burkholderia cepacia complex</taxon>
    </lineage>
</organism>
<dbReference type="EMBL" id="CP000151">
    <property type="protein sequence ID" value="ABB09280.1"/>
    <property type="molecule type" value="Genomic_DNA"/>
</dbReference>
<dbReference type="RefSeq" id="WP_011352806.1">
    <property type="nucleotide sequence ID" value="NC_007510.1"/>
</dbReference>
<dbReference type="SMR" id="Q39E36"/>
<dbReference type="GeneID" id="45095573"/>
<dbReference type="KEGG" id="bur:Bcep18194_A5686"/>
<dbReference type="PATRIC" id="fig|482957.22.peg.2663"/>
<dbReference type="HOGENOM" id="CLU_006684_3_0_4"/>
<dbReference type="Proteomes" id="UP000002705">
    <property type="component" value="Chromosome 1"/>
</dbReference>
<dbReference type="GO" id="GO:0005737">
    <property type="term" value="C:cytoplasm"/>
    <property type="evidence" value="ECO:0007669"/>
    <property type="project" value="UniProtKB-SubCell"/>
</dbReference>
<dbReference type="GO" id="GO:0005524">
    <property type="term" value="F:ATP binding"/>
    <property type="evidence" value="ECO:0007669"/>
    <property type="project" value="UniProtKB-UniRule"/>
</dbReference>
<dbReference type="GO" id="GO:0016887">
    <property type="term" value="F:ATP hydrolysis activity"/>
    <property type="evidence" value="ECO:0007669"/>
    <property type="project" value="InterPro"/>
</dbReference>
<dbReference type="GO" id="GO:0140662">
    <property type="term" value="F:ATP-dependent protein folding chaperone"/>
    <property type="evidence" value="ECO:0007669"/>
    <property type="project" value="InterPro"/>
</dbReference>
<dbReference type="GO" id="GO:0051082">
    <property type="term" value="F:unfolded protein binding"/>
    <property type="evidence" value="ECO:0007669"/>
    <property type="project" value="UniProtKB-UniRule"/>
</dbReference>
<dbReference type="CDD" id="cd16927">
    <property type="entry name" value="HATPase_Hsp90-like"/>
    <property type="match status" value="1"/>
</dbReference>
<dbReference type="FunFam" id="3.30.230.80:FF:000002">
    <property type="entry name" value="Molecular chaperone HtpG"/>
    <property type="match status" value="1"/>
</dbReference>
<dbReference type="FunFam" id="3.30.565.10:FF:000009">
    <property type="entry name" value="Molecular chaperone HtpG"/>
    <property type="match status" value="1"/>
</dbReference>
<dbReference type="Gene3D" id="3.30.230.80">
    <property type="match status" value="1"/>
</dbReference>
<dbReference type="Gene3D" id="3.40.50.11260">
    <property type="match status" value="1"/>
</dbReference>
<dbReference type="Gene3D" id="1.20.120.790">
    <property type="entry name" value="Heat shock protein 90, C-terminal domain"/>
    <property type="match status" value="1"/>
</dbReference>
<dbReference type="Gene3D" id="3.30.565.10">
    <property type="entry name" value="Histidine kinase-like ATPase, C-terminal domain"/>
    <property type="match status" value="1"/>
</dbReference>
<dbReference type="HAMAP" id="MF_00505">
    <property type="entry name" value="HSP90"/>
    <property type="match status" value="1"/>
</dbReference>
<dbReference type="InterPro" id="IPR036890">
    <property type="entry name" value="HATPase_C_sf"/>
</dbReference>
<dbReference type="InterPro" id="IPR019805">
    <property type="entry name" value="Heat_shock_protein_90_CS"/>
</dbReference>
<dbReference type="InterPro" id="IPR037196">
    <property type="entry name" value="HSP90_C"/>
</dbReference>
<dbReference type="InterPro" id="IPR001404">
    <property type="entry name" value="Hsp90_fam"/>
</dbReference>
<dbReference type="InterPro" id="IPR020575">
    <property type="entry name" value="Hsp90_N"/>
</dbReference>
<dbReference type="InterPro" id="IPR020568">
    <property type="entry name" value="Ribosomal_Su5_D2-typ_SF"/>
</dbReference>
<dbReference type="NCBIfam" id="NF003555">
    <property type="entry name" value="PRK05218.1"/>
    <property type="match status" value="1"/>
</dbReference>
<dbReference type="PANTHER" id="PTHR11528">
    <property type="entry name" value="HEAT SHOCK PROTEIN 90 FAMILY MEMBER"/>
    <property type="match status" value="1"/>
</dbReference>
<dbReference type="Pfam" id="PF13589">
    <property type="entry name" value="HATPase_c_3"/>
    <property type="match status" value="1"/>
</dbReference>
<dbReference type="Pfam" id="PF00183">
    <property type="entry name" value="HSP90"/>
    <property type="match status" value="1"/>
</dbReference>
<dbReference type="PIRSF" id="PIRSF002583">
    <property type="entry name" value="Hsp90"/>
    <property type="match status" value="1"/>
</dbReference>
<dbReference type="PRINTS" id="PR00775">
    <property type="entry name" value="HEATSHOCK90"/>
</dbReference>
<dbReference type="SMART" id="SM00387">
    <property type="entry name" value="HATPase_c"/>
    <property type="match status" value="1"/>
</dbReference>
<dbReference type="SUPFAM" id="SSF55874">
    <property type="entry name" value="ATPase domain of HSP90 chaperone/DNA topoisomerase II/histidine kinase"/>
    <property type="match status" value="1"/>
</dbReference>
<dbReference type="SUPFAM" id="SSF110942">
    <property type="entry name" value="HSP90 C-terminal domain"/>
    <property type="match status" value="1"/>
</dbReference>
<dbReference type="SUPFAM" id="SSF54211">
    <property type="entry name" value="Ribosomal protein S5 domain 2-like"/>
    <property type="match status" value="1"/>
</dbReference>
<dbReference type="PROSITE" id="PS00298">
    <property type="entry name" value="HSP90"/>
    <property type="match status" value="1"/>
</dbReference>
<gene>
    <name evidence="1" type="primary">htpG</name>
    <name type="ordered locus">Bcep18194_A5686</name>
</gene>
<sequence>MAHETMSFQAEVKQLLHLMIHSLYSNKEIFLRELVSNASDAADKLRFEGLADNALYEDDPNVRIRIGYDKAARTITIDDNGIGMSRDEAIANLGTIARSGTKEFFTKLSGDQQKDAALIGQFGVGFYSGFIVADKITVETRRAGLPASEAVRWESAGEGDFTIDAIERAQRGTTITLHLREGEDELLSSHRLQSIIQKYSDHIALPILMQKEEWDQEKGEMVLKDEDETVNQASALWTRSKSEVSDEQYTQFYQHIAHDHQDPLTWTHNRVEGRSEYTQLLFVPSHAPFDMWNRDYRGGLKLYVKRVFIMDDAEQLLPQYLRFVKGVVDSADLPLNVSREILQESRDVKAIREGVTKRALSMLEELANAEEDAGKEKYKTFWGAFGQVLKEGLGEDHANRERIAKLLRFASTHGDTDAQDVSLADYVSRMKPEQSRIYYVTADAWQAAKNSPHLEVFRKKGVEVLLLTDRVDEWMLSFLQEFDGKPLASVARGDLDLGELNDEEKKAQEEAGEAIKPVVEKMKEALGDKVKEVRVTFRLTDSPSCLVADDNDMSGYLQRMLKAAGQNAPAMQPILEINPEHALVKQLKADSADFGDWCHLLFDQALLAEGGMLDDPASFVKRTNALLLSRAA</sequence>
<name>HTPG_BURL3</name>